<evidence type="ECO:0000255" key="1">
    <source>
        <dbReference type="PROSITE-ProRule" id="PRU00691"/>
    </source>
</evidence>
<evidence type="ECO:0000305" key="2"/>
<evidence type="ECO:0007829" key="3">
    <source>
        <dbReference type="PDB" id="6GXG"/>
    </source>
</evidence>
<accession>O77404</accession>
<name>TYPX_TRYBB</name>
<organism>
    <name type="scientific">Trypanosoma brucei brucei</name>
    <dbReference type="NCBI Taxonomy" id="5702"/>
    <lineage>
        <taxon>Eukaryota</taxon>
        <taxon>Discoba</taxon>
        <taxon>Euglenozoa</taxon>
        <taxon>Kinetoplastea</taxon>
        <taxon>Metakinetoplastina</taxon>
        <taxon>Trypanosomatida</taxon>
        <taxon>Trypanosomatidae</taxon>
        <taxon>Trypanosoma</taxon>
    </lineage>
</organism>
<keyword id="KW-0002">3D-structure</keyword>
<keyword id="KW-1015">Disulfide bond</keyword>
<keyword id="KW-0249">Electron transport</keyword>
<keyword id="KW-0676">Redox-active center</keyword>
<keyword id="KW-0813">Transport</keyword>
<sequence length="144" mass="15891">MSGLAKYLPGATNLLSKSGEVSLGSLVGKTVFLYFSASWCPPCRGFTPVLAEFYEKHHVAKNFEVVLISWDENESDFHDYYGKMPWLALPFDQRSTVSELGKTFGVESIPTLITINADTGAIIGTQARTRVIEDPDGANFPWPN</sequence>
<comment type="function">
    <text>Acts as a thiol-disulfide oxidoreductase. It is spontaneously reduced by trypanothione.</text>
</comment>
<comment type="similarity">
    <text evidence="2">Belongs to the thioredoxin family.</text>
</comment>
<proteinExistence type="evidence at protein level"/>
<dbReference type="EMBL" id="AJ006403">
    <property type="protein sequence ID" value="CAA07003.1"/>
    <property type="molecule type" value="mRNA"/>
</dbReference>
<dbReference type="PDB" id="1O73">
    <property type="method" value="X-ray"/>
    <property type="resolution" value="2.28 A"/>
    <property type="chains" value="A=1-144"/>
</dbReference>
<dbReference type="PDB" id="6GXG">
    <property type="method" value="X-ray"/>
    <property type="resolution" value="1.60 A"/>
    <property type="chains" value="A=2-142, B/C=2-144"/>
</dbReference>
<dbReference type="PDB" id="6GXY">
    <property type="method" value="X-ray"/>
    <property type="resolution" value="1.80 A"/>
    <property type="chains" value="A/B/C=2-144"/>
</dbReference>
<dbReference type="PDBsum" id="1O73"/>
<dbReference type="PDBsum" id="6GXG"/>
<dbReference type="PDBsum" id="6GXY"/>
<dbReference type="SASBDB" id="O77404"/>
<dbReference type="SMR" id="O77404"/>
<dbReference type="EvolutionaryTrace" id="O77404"/>
<dbReference type="GO" id="GO:0005634">
    <property type="term" value="C:nucleus"/>
    <property type="evidence" value="ECO:0007669"/>
    <property type="project" value="TreeGrafter"/>
</dbReference>
<dbReference type="GO" id="GO:0004791">
    <property type="term" value="F:thioredoxin-disulfide reductase (NADPH) activity"/>
    <property type="evidence" value="ECO:0007669"/>
    <property type="project" value="InterPro"/>
</dbReference>
<dbReference type="GO" id="GO:0031397">
    <property type="term" value="P:negative regulation of protein ubiquitination"/>
    <property type="evidence" value="ECO:0007669"/>
    <property type="project" value="TreeGrafter"/>
</dbReference>
<dbReference type="GO" id="GO:0030178">
    <property type="term" value="P:negative regulation of Wnt signaling pathway"/>
    <property type="evidence" value="ECO:0007669"/>
    <property type="project" value="TreeGrafter"/>
</dbReference>
<dbReference type="CDD" id="cd03009">
    <property type="entry name" value="TryX_like_TryX_NRX"/>
    <property type="match status" value="1"/>
</dbReference>
<dbReference type="FunFam" id="3.40.30.10:FF:000288">
    <property type="entry name" value="Tryparedoxin 1a"/>
    <property type="match status" value="1"/>
</dbReference>
<dbReference type="Gene3D" id="3.40.30.10">
    <property type="entry name" value="Glutaredoxin"/>
    <property type="match status" value="1"/>
</dbReference>
<dbReference type="InterPro" id="IPR012336">
    <property type="entry name" value="Thioredoxin-like_fold"/>
</dbReference>
<dbReference type="InterPro" id="IPR036249">
    <property type="entry name" value="Thioredoxin-like_sf"/>
</dbReference>
<dbReference type="InterPro" id="IPR017937">
    <property type="entry name" value="Thioredoxin_CS"/>
</dbReference>
<dbReference type="InterPro" id="IPR013766">
    <property type="entry name" value="Thioredoxin_domain"/>
</dbReference>
<dbReference type="InterPro" id="IPR045870">
    <property type="entry name" value="TryX_NRX_thioredoxin_dom"/>
</dbReference>
<dbReference type="PANTHER" id="PTHR46472">
    <property type="entry name" value="NUCLEOREDOXIN"/>
    <property type="match status" value="1"/>
</dbReference>
<dbReference type="PANTHER" id="PTHR46472:SF1">
    <property type="entry name" value="NUCLEOREDOXIN"/>
    <property type="match status" value="1"/>
</dbReference>
<dbReference type="Pfam" id="PF13905">
    <property type="entry name" value="Thioredoxin_8"/>
    <property type="match status" value="1"/>
</dbReference>
<dbReference type="SUPFAM" id="SSF52833">
    <property type="entry name" value="Thioredoxin-like"/>
    <property type="match status" value="1"/>
</dbReference>
<dbReference type="PROSITE" id="PS00194">
    <property type="entry name" value="THIOREDOXIN_1"/>
    <property type="match status" value="1"/>
</dbReference>
<dbReference type="PROSITE" id="PS51352">
    <property type="entry name" value="THIOREDOXIN_2"/>
    <property type="match status" value="1"/>
</dbReference>
<feature type="chain" id="PRO_0000120066" description="Tryparedoxin">
    <location>
        <begin position="1"/>
        <end position="144"/>
    </location>
</feature>
<feature type="domain" description="Thioredoxin" evidence="1">
    <location>
        <begin position="2"/>
        <end position="144"/>
    </location>
</feature>
<feature type="disulfide bond" description="Redox-active">
    <location>
        <begin position="40"/>
        <end position="43"/>
    </location>
</feature>
<feature type="turn" evidence="3">
    <location>
        <begin position="3"/>
        <end position="7"/>
    </location>
</feature>
<feature type="strand" evidence="3">
    <location>
        <begin position="13"/>
        <end position="15"/>
    </location>
</feature>
<feature type="strand" evidence="3">
    <location>
        <begin position="17"/>
        <end position="19"/>
    </location>
</feature>
<feature type="helix" evidence="3">
    <location>
        <begin position="23"/>
        <end position="26"/>
    </location>
</feature>
<feature type="strand" evidence="3">
    <location>
        <begin position="30"/>
        <end position="36"/>
    </location>
</feature>
<feature type="helix" evidence="3">
    <location>
        <begin position="41"/>
        <end position="57"/>
    </location>
</feature>
<feature type="turn" evidence="3">
    <location>
        <begin position="58"/>
        <end position="62"/>
    </location>
</feature>
<feature type="strand" evidence="3">
    <location>
        <begin position="63"/>
        <end position="69"/>
    </location>
</feature>
<feature type="helix" evidence="3">
    <location>
        <begin position="74"/>
        <end position="81"/>
    </location>
</feature>
<feature type="strand" evidence="3">
    <location>
        <begin position="85"/>
        <end position="88"/>
    </location>
</feature>
<feature type="helix" evidence="3">
    <location>
        <begin position="91"/>
        <end position="96"/>
    </location>
</feature>
<feature type="helix" evidence="3">
    <location>
        <begin position="97"/>
        <end position="104"/>
    </location>
</feature>
<feature type="strand" evidence="3">
    <location>
        <begin position="108"/>
        <end position="116"/>
    </location>
</feature>
<feature type="turn" evidence="3">
    <location>
        <begin position="117"/>
        <end position="119"/>
    </location>
</feature>
<feature type="strand" evidence="3">
    <location>
        <begin position="122"/>
        <end position="125"/>
    </location>
</feature>
<feature type="helix" evidence="3">
    <location>
        <begin position="127"/>
        <end position="133"/>
    </location>
</feature>
<feature type="strand" evidence="3">
    <location>
        <begin position="136"/>
        <end position="139"/>
    </location>
</feature>
<protein>
    <recommendedName>
        <fullName>Tryparedoxin</fullName>
        <shortName>TryX</shortName>
    </recommendedName>
</protein>
<reference key="1">
    <citation type="journal article" date="1998" name="FEBS Lett.">
        <title>Trypanosoma brucei tryparedoxin, a thioredoxin-like protein in African trypanosomes.</title>
        <authorList>
            <person name="Luedemann H."/>
            <person name="Dormeyer M."/>
            <person name="Sticherling C."/>
            <person name="Stallmann D."/>
            <person name="Follmann H."/>
            <person name="Krauth-Siegel R.L."/>
        </authorList>
    </citation>
    <scope>NUCLEOTIDE SEQUENCE [MRNA]</scope>
</reference>
<reference key="2">
    <citation type="journal article" date="2003" name="J. Biol. Chem.">
        <title>Tryparedoxins from Crithidia fasciculata and Trypanosoma brucei: photoreduction of the redox disulfide using synchrotron radiation and evidence for a conformational switch implicated in function.</title>
        <authorList>
            <person name="Alphey M.S."/>
            <person name="Gabrielsen M."/>
            <person name="Micossi E."/>
            <person name="Leonard G.A."/>
            <person name="McSweeney S.M."/>
            <person name="Ravelli R.B."/>
            <person name="Tetaud E."/>
            <person name="Fairlamb A.H."/>
            <person name="Bond C.S."/>
            <person name="Hunter W.N."/>
        </authorList>
    </citation>
    <scope>X-RAY CRYSTALLOGRAPHY (2.28 ANGSTROMS)</scope>
</reference>